<proteinExistence type="inferred from homology"/>
<keyword id="KW-0028">Amino-acid biosynthesis</keyword>
<keyword id="KW-0055">Arginine biosynthesis</keyword>
<keyword id="KW-0963">Cytoplasm</keyword>
<keyword id="KW-1185">Reference proteome</keyword>
<keyword id="KW-0808">Transferase</keyword>
<protein>
    <recommendedName>
        <fullName evidence="2">Ornithine carbamoyltransferase</fullName>
        <shortName evidence="2">OTCase</shortName>
        <ecNumber evidence="2">2.1.3.3</ecNumber>
    </recommendedName>
</protein>
<name>OTC_BURMA</name>
<feature type="chain" id="PRO_0000112900" description="Ornithine carbamoyltransferase">
    <location>
        <begin position="1"/>
        <end position="309"/>
    </location>
</feature>
<feature type="binding site" evidence="2">
    <location>
        <begin position="56"/>
        <end position="59"/>
    </location>
    <ligand>
        <name>carbamoyl phosphate</name>
        <dbReference type="ChEBI" id="CHEBI:58228"/>
    </ligand>
</feature>
<feature type="binding site" evidence="2">
    <location>
        <position position="83"/>
    </location>
    <ligand>
        <name>carbamoyl phosphate</name>
        <dbReference type="ChEBI" id="CHEBI:58228"/>
    </ligand>
</feature>
<feature type="binding site" evidence="2">
    <location>
        <position position="107"/>
    </location>
    <ligand>
        <name>carbamoyl phosphate</name>
        <dbReference type="ChEBI" id="CHEBI:58228"/>
    </ligand>
</feature>
<feature type="binding site" evidence="2">
    <location>
        <begin position="134"/>
        <end position="137"/>
    </location>
    <ligand>
        <name>carbamoyl phosphate</name>
        <dbReference type="ChEBI" id="CHEBI:58228"/>
    </ligand>
</feature>
<feature type="binding site" evidence="2">
    <location>
        <position position="165"/>
    </location>
    <ligand>
        <name>L-ornithine</name>
        <dbReference type="ChEBI" id="CHEBI:46911"/>
    </ligand>
</feature>
<feature type="binding site" evidence="2">
    <location>
        <position position="223"/>
    </location>
    <ligand>
        <name>L-ornithine</name>
        <dbReference type="ChEBI" id="CHEBI:46911"/>
    </ligand>
</feature>
<feature type="binding site" evidence="2">
    <location>
        <begin position="227"/>
        <end position="228"/>
    </location>
    <ligand>
        <name>L-ornithine</name>
        <dbReference type="ChEBI" id="CHEBI:46911"/>
    </ligand>
</feature>
<feature type="binding site" evidence="2">
    <location>
        <begin position="263"/>
        <end position="264"/>
    </location>
    <ligand>
        <name>carbamoyl phosphate</name>
        <dbReference type="ChEBI" id="CHEBI:58228"/>
    </ligand>
</feature>
<feature type="binding site" evidence="2">
    <location>
        <position position="291"/>
    </location>
    <ligand>
        <name>carbamoyl phosphate</name>
        <dbReference type="ChEBI" id="CHEBI:58228"/>
    </ligand>
</feature>
<comment type="function">
    <text evidence="1">Reversibly catalyzes the transfer of the carbamoyl group from carbamoyl phosphate (CP) to the N(epsilon) atom of ornithine (ORN) to produce L-citrulline.</text>
</comment>
<comment type="catalytic activity">
    <reaction evidence="2">
        <text>carbamoyl phosphate + L-ornithine = L-citrulline + phosphate + H(+)</text>
        <dbReference type="Rhea" id="RHEA:19513"/>
        <dbReference type="ChEBI" id="CHEBI:15378"/>
        <dbReference type="ChEBI" id="CHEBI:43474"/>
        <dbReference type="ChEBI" id="CHEBI:46911"/>
        <dbReference type="ChEBI" id="CHEBI:57743"/>
        <dbReference type="ChEBI" id="CHEBI:58228"/>
        <dbReference type="EC" id="2.1.3.3"/>
    </reaction>
</comment>
<comment type="pathway">
    <text evidence="2">Amino-acid biosynthesis; L-arginine biosynthesis; L-arginine from L-ornithine and carbamoyl phosphate: step 1/3.</text>
</comment>
<comment type="subcellular location">
    <subcellularLocation>
        <location evidence="2">Cytoplasm</location>
    </subcellularLocation>
</comment>
<comment type="similarity">
    <text evidence="2">Belongs to the aspartate/ornithine carbamoyltransferase superfamily. OTCase family.</text>
</comment>
<sequence length="309" mass="35418">MTAKTIRHYLQFKDFSLEDYEYVLERTGILKRKFKNYETYHPLHDRTLAMIFEKSSTRTRLSFEAGIFQLGGHAVFMSTRDTQLGRGEPVEDSAQVISRMVDIIMIRTFEQDIIQRFAENSRVPVINGLTNEYHPCQVLADIFTYYEHRGPIRGKTVAWVGDANNMLYTWIQAARILGFKLRLSTPPGYALDTKLVDAESAPFYQVFDDPNEACKGADLVTTDVWTSMGFEAENEARKQAFADWCVDEEMMSHAHPDALFMHCLPAHRGEEVTAGVIDGPQSVVWDEAENRLHVQKALMEFLLLGRLNH</sequence>
<reference key="1">
    <citation type="journal article" date="2004" name="Proc. Natl. Acad. Sci. U.S.A.">
        <title>Structural flexibility in the Burkholderia mallei genome.</title>
        <authorList>
            <person name="Nierman W.C."/>
            <person name="DeShazer D."/>
            <person name="Kim H.S."/>
            <person name="Tettelin H."/>
            <person name="Nelson K.E."/>
            <person name="Feldblyum T.V."/>
            <person name="Ulrich R.L."/>
            <person name="Ronning C.M."/>
            <person name="Brinkac L.M."/>
            <person name="Daugherty S.C."/>
            <person name="Davidsen T.D."/>
            <person name="DeBoy R.T."/>
            <person name="Dimitrov G."/>
            <person name="Dodson R.J."/>
            <person name="Durkin A.S."/>
            <person name="Gwinn M.L."/>
            <person name="Haft D.H."/>
            <person name="Khouri H.M."/>
            <person name="Kolonay J.F."/>
            <person name="Madupu R."/>
            <person name="Mohammoud Y."/>
            <person name="Nelson W.C."/>
            <person name="Radune D."/>
            <person name="Romero C.M."/>
            <person name="Sarria S."/>
            <person name="Selengut J."/>
            <person name="Shamblin C."/>
            <person name="Sullivan S.A."/>
            <person name="White O."/>
            <person name="Yu Y."/>
            <person name="Zafar N."/>
            <person name="Zhou L."/>
            <person name="Fraser C.M."/>
        </authorList>
    </citation>
    <scope>NUCLEOTIDE SEQUENCE [LARGE SCALE GENOMIC DNA]</scope>
    <source>
        <strain>ATCC 23344</strain>
    </source>
</reference>
<evidence type="ECO:0000250" key="1"/>
<evidence type="ECO:0000255" key="2">
    <source>
        <dbReference type="HAMAP-Rule" id="MF_01109"/>
    </source>
</evidence>
<accession>Q62M76</accession>
<organism>
    <name type="scientific">Burkholderia mallei (strain ATCC 23344)</name>
    <dbReference type="NCBI Taxonomy" id="243160"/>
    <lineage>
        <taxon>Bacteria</taxon>
        <taxon>Pseudomonadati</taxon>
        <taxon>Pseudomonadota</taxon>
        <taxon>Betaproteobacteria</taxon>
        <taxon>Burkholderiales</taxon>
        <taxon>Burkholderiaceae</taxon>
        <taxon>Burkholderia</taxon>
        <taxon>pseudomallei group</taxon>
    </lineage>
</organism>
<dbReference type="EC" id="2.1.3.3" evidence="2"/>
<dbReference type="EMBL" id="CP000010">
    <property type="protein sequence ID" value="AAU49186.1"/>
    <property type="molecule type" value="Genomic_DNA"/>
</dbReference>
<dbReference type="RefSeq" id="WP_004190177.1">
    <property type="nucleotide sequence ID" value="NC_006348.1"/>
</dbReference>
<dbReference type="RefSeq" id="YP_102192.1">
    <property type="nucleotide sequence ID" value="NC_006348.1"/>
</dbReference>
<dbReference type="SMR" id="Q62M76"/>
<dbReference type="GeneID" id="93059376"/>
<dbReference type="KEGG" id="bma:BMA0375"/>
<dbReference type="PATRIC" id="fig|243160.12.peg.378"/>
<dbReference type="eggNOG" id="COG0078">
    <property type="taxonomic scope" value="Bacteria"/>
</dbReference>
<dbReference type="HOGENOM" id="CLU_043846_3_2_4"/>
<dbReference type="UniPathway" id="UPA00068">
    <property type="reaction ID" value="UER00112"/>
</dbReference>
<dbReference type="Proteomes" id="UP000006693">
    <property type="component" value="Chromosome 1"/>
</dbReference>
<dbReference type="GO" id="GO:0005737">
    <property type="term" value="C:cytoplasm"/>
    <property type="evidence" value="ECO:0007669"/>
    <property type="project" value="UniProtKB-SubCell"/>
</dbReference>
<dbReference type="GO" id="GO:0016597">
    <property type="term" value="F:amino acid binding"/>
    <property type="evidence" value="ECO:0007669"/>
    <property type="project" value="InterPro"/>
</dbReference>
<dbReference type="GO" id="GO:0004585">
    <property type="term" value="F:ornithine carbamoyltransferase activity"/>
    <property type="evidence" value="ECO:0007669"/>
    <property type="project" value="UniProtKB-UniRule"/>
</dbReference>
<dbReference type="GO" id="GO:0042450">
    <property type="term" value="P:arginine biosynthetic process via ornithine"/>
    <property type="evidence" value="ECO:0007669"/>
    <property type="project" value="TreeGrafter"/>
</dbReference>
<dbReference type="GO" id="GO:0019240">
    <property type="term" value="P:citrulline biosynthetic process"/>
    <property type="evidence" value="ECO:0007669"/>
    <property type="project" value="TreeGrafter"/>
</dbReference>
<dbReference type="GO" id="GO:0006526">
    <property type="term" value="P:L-arginine biosynthetic process"/>
    <property type="evidence" value="ECO:0007669"/>
    <property type="project" value="UniProtKB-UniRule"/>
</dbReference>
<dbReference type="FunFam" id="3.40.50.1370:FF:000008">
    <property type="entry name" value="Ornithine carbamoyltransferase"/>
    <property type="match status" value="1"/>
</dbReference>
<dbReference type="Gene3D" id="3.40.50.1370">
    <property type="entry name" value="Aspartate/ornithine carbamoyltransferase"/>
    <property type="match status" value="2"/>
</dbReference>
<dbReference type="HAMAP" id="MF_01109">
    <property type="entry name" value="OTCase"/>
    <property type="match status" value="1"/>
</dbReference>
<dbReference type="InterPro" id="IPR006132">
    <property type="entry name" value="Asp/Orn_carbamoyltranf_P-bd"/>
</dbReference>
<dbReference type="InterPro" id="IPR006130">
    <property type="entry name" value="Asp/Orn_carbamoylTrfase"/>
</dbReference>
<dbReference type="InterPro" id="IPR036901">
    <property type="entry name" value="Asp/Orn_carbamoylTrfase_sf"/>
</dbReference>
<dbReference type="InterPro" id="IPR006131">
    <property type="entry name" value="Asp_carbamoyltransf_Asp/Orn-bd"/>
</dbReference>
<dbReference type="InterPro" id="IPR002292">
    <property type="entry name" value="Orn/put_carbamltrans"/>
</dbReference>
<dbReference type="InterPro" id="IPR024904">
    <property type="entry name" value="OTCase_ArgI"/>
</dbReference>
<dbReference type="NCBIfam" id="TIGR00658">
    <property type="entry name" value="orni_carb_tr"/>
    <property type="match status" value="1"/>
</dbReference>
<dbReference type="NCBIfam" id="NF001986">
    <property type="entry name" value="PRK00779.1"/>
    <property type="match status" value="1"/>
</dbReference>
<dbReference type="PANTHER" id="PTHR45753">
    <property type="entry name" value="ORNITHINE CARBAMOYLTRANSFERASE, MITOCHONDRIAL"/>
    <property type="match status" value="1"/>
</dbReference>
<dbReference type="PANTHER" id="PTHR45753:SF3">
    <property type="entry name" value="ORNITHINE TRANSCARBAMYLASE, MITOCHONDRIAL"/>
    <property type="match status" value="1"/>
</dbReference>
<dbReference type="Pfam" id="PF00185">
    <property type="entry name" value="OTCace"/>
    <property type="match status" value="1"/>
</dbReference>
<dbReference type="Pfam" id="PF02729">
    <property type="entry name" value="OTCace_N"/>
    <property type="match status" value="1"/>
</dbReference>
<dbReference type="PRINTS" id="PR00100">
    <property type="entry name" value="AOTCASE"/>
</dbReference>
<dbReference type="PRINTS" id="PR00102">
    <property type="entry name" value="OTCASE"/>
</dbReference>
<dbReference type="SUPFAM" id="SSF53671">
    <property type="entry name" value="Aspartate/ornithine carbamoyltransferase"/>
    <property type="match status" value="1"/>
</dbReference>
<dbReference type="PROSITE" id="PS00097">
    <property type="entry name" value="CARBAMOYLTRANSFERASE"/>
    <property type="match status" value="1"/>
</dbReference>
<gene>
    <name evidence="2" type="primary">argF</name>
    <name type="ordered locus">BMA0375</name>
</gene>